<gene>
    <name evidence="1" type="primary">grpE</name>
    <name type="ordered locus">MMOB1120</name>
</gene>
<dbReference type="EMBL" id="AE017308">
    <property type="protein sequence ID" value="AAT27598.1"/>
    <property type="status" value="ALT_INIT"/>
    <property type="molecule type" value="Genomic_DNA"/>
</dbReference>
<dbReference type="RefSeq" id="WP_011264632.1">
    <property type="nucleotide sequence ID" value="NC_006908.1"/>
</dbReference>
<dbReference type="SMR" id="Q6KIH8"/>
<dbReference type="STRING" id="267748.MMOB1120"/>
<dbReference type="KEGG" id="mmo:MMOB1120"/>
<dbReference type="eggNOG" id="COG0576">
    <property type="taxonomic scope" value="Bacteria"/>
</dbReference>
<dbReference type="HOGENOM" id="CLU_070790_0_0_14"/>
<dbReference type="OrthoDB" id="9812586at2"/>
<dbReference type="Proteomes" id="UP000009072">
    <property type="component" value="Chromosome"/>
</dbReference>
<dbReference type="GO" id="GO:0005737">
    <property type="term" value="C:cytoplasm"/>
    <property type="evidence" value="ECO:0007669"/>
    <property type="project" value="UniProtKB-SubCell"/>
</dbReference>
<dbReference type="GO" id="GO:0000774">
    <property type="term" value="F:adenyl-nucleotide exchange factor activity"/>
    <property type="evidence" value="ECO:0007669"/>
    <property type="project" value="InterPro"/>
</dbReference>
<dbReference type="GO" id="GO:0042803">
    <property type="term" value="F:protein homodimerization activity"/>
    <property type="evidence" value="ECO:0007669"/>
    <property type="project" value="InterPro"/>
</dbReference>
<dbReference type="GO" id="GO:0051087">
    <property type="term" value="F:protein-folding chaperone binding"/>
    <property type="evidence" value="ECO:0007669"/>
    <property type="project" value="InterPro"/>
</dbReference>
<dbReference type="GO" id="GO:0051082">
    <property type="term" value="F:unfolded protein binding"/>
    <property type="evidence" value="ECO:0007669"/>
    <property type="project" value="TreeGrafter"/>
</dbReference>
<dbReference type="GO" id="GO:0006457">
    <property type="term" value="P:protein folding"/>
    <property type="evidence" value="ECO:0007669"/>
    <property type="project" value="InterPro"/>
</dbReference>
<dbReference type="CDD" id="cd00446">
    <property type="entry name" value="GrpE"/>
    <property type="match status" value="1"/>
</dbReference>
<dbReference type="Gene3D" id="3.90.20.20">
    <property type="match status" value="1"/>
</dbReference>
<dbReference type="Gene3D" id="2.30.22.10">
    <property type="entry name" value="Head domain of nucleotide exchange factor GrpE"/>
    <property type="match status" value="1"/>
</dbReference>
<dbReference type="HAMAP" id="MF_01151">
    <property type="entry name" value="GrpE"/>
    <property type="match status" value="1"/>
</dbReference>
<dbReference type="InterPro" id="IPR000740">
    <property type="entry name" value="GrpE"/>
</dbReference>
<dbReference type="InterPro" id="IPR013805">
    <property type="entry name" value="GrpE_coiled_coil"/>
</dbReference>
<dbReference type="InterPro" id="IPR009012">
    <property type="entry name" value="GrpE_head"/>
</dbReference>
<dbReference type="PANTHER" id="PTHR21237">
    <property type="entry name" value="GRPE PROTEIN"/>
    <property type="match status" value="1"/>
</dbReference>
<dbReference type="PANTHER" id="PTHR21237:SF23">
    <property type="entry name" value="GRPE PROTEIN HOMOLOG, MITOCHONDRIAL"/>
    <property type="match status" value="1"/>
</dbReference>
<dbReference type="Pfam" id="PF01025">
    <property type="entry name" value="GrpE"/>
    <property type="match status" value="1"/>
</dbReference>
<dbReference type="PRINTS" id="PR00773">
    <property type="entry name" value="GRPEPROTEIN"/>
</dbReference>
<dbReference type="SUPFAM" id="SSF58014">
    <property type="entry name" value="Coiled-coil domain of nucleotide exchange factor GrpE"/>
    <property type="match status" value="1"/>
</dbReference>
<dbReference type="SUPFAM" id="SSF51064">
    <property type="entry name" value="Head domain of nucleotide exchange factor GrpE"/>
    <property type="match status" value="1"/>
</dbReference>
<dbReference type="PROSITE" id="PS01071">
    <property type="entry name" value="GRPE"/>
    <property type="match status" value="1"/>
</dbReference>
<accession>Q6KIH8</accession>
<name>GRPE_MYCM1</name>
<reference key="1">
    <citation type="journal article" date="2004" name="Genome Res.">
        <title>The complete genome and proteome of Mycoplasma mobile.</title>
        <authorList>
            <person name="Jaffe J.D."/>
            <person name="Stange-Thomann N."/>
            <person name="Smith C."/>
            <person name="DeCaprio D."/>
            <person name="Fisher S."/>
            <person name="Butler J."/>
            <person name="Calvo S."/>
            <person name="Elkins T."/>
            <person name="FitzGerald M.G."/>
            <person name="Hafez N."/>
            <person name="Kodira C.D."/>
            <person name="Major J."/>
            <person name="Wang S."/>
            <person name="Wilkinson J."/>
            <person name="Nicol R."/>
            <person name="Nusbaum C."/>
            <person name="Birren B."/>
            <person name="Berg H.C."/>
            <person name="Church G.M."/>
        </authorList>
    </citation>
    <scope>NUCLEOTIDE SEQUENCE [LARGE SCALE GENOMIC DNA]</scope>
    <source>
        <strain>ATCC 43663 / NCTC 11711 / 163 K</strain>
    </source>
</reference>
<proteinExistence type="inferred from homology"/>
<evidence type="ECO:0000255" key="1">
    <source>
        <dbReference type="HAMAP-Rule" id="MF_01151"/>
    </source>
</evidence>
<evidence type="ECO:0000305" key="2"/>
<organism>
    <name type="scientific">Mycoplasma mobile (strain ATCC 43663 / 163K / NCTC 11711)</name>
    <name type="common">Mesomycoplasma mobile</name>
    <dbReference type="NCBI Taxonomy" id="267748"/>
    <lineage>
        <taxon>Bacteria</taxon>
        <taxon>Bacillati</taxon>
        <taxon>Mycoplasmatota</taxon>
        <taxon>Mycoplasmoidales</taxon>
        <taxon>Metamycoplasmataceae</taxon>
        <taxon>Mesomycoplasma</taxon>
    </lineage>
</organism>
<feature type="chain" id="PRO_0000113817" description="Protein GrpE">
    <location>
        <begin position="1"/>
        <end position="243"/>
    </location>
</feature>
<keyword id="KW-0143">Chaperone</keyword>
<keyword id="KW-0963">Cytoplasm</keyword>
<keyword id="KW-1185">Reference proteome</keyword>
<keyword id="KW-0346">Stress response</keyword>
<protein>
    <recommendedName>
        <fullName evidence="1">Protein GrpE</fullName>
    </recommendedName>
    <alternativeName>
        <fullName evidence="1">HSP-70 cofactor</fullName>
    </alternativeName>
</protein>
<comment type="function">
    <text evidence="1">Participates actively in the response to hyperosmotic and heat shock by preventing the aggregation of stress-denatured proteins, in association with DnaK and GrpE. It is the nucleotide exchange factor for DnaK and may function as a thermosensor. Unfolded proteins bind initially to DnaJ; upon interaction with the DnaJ-bound protein, DnaK hydrolyzes its bound ATP, resulting in the formation of a stable complex. GrpE releases ADP from DnaK; ATP binding to DnaK triggers the release of the substrate protein, thus completing the reaction cycle. Several rounds of ATP-dependent interactions between DnaJ, DnaK and GrpE are required for fully efficient folding.</text>
</comment>
<comment type="subunit">
    <text evidence="1">Homodimer.</text>
</comment>
<comment type="subcellular location">
    <subcellularLocation>
        <location evidence="1">Cytoplasm</location>
    </subcellularLocation>
</comment>
<comment type="similarity">
    <text evidence="1">Belongs to the GrpE family.</text>
</comment>
<comment type="sequence caution" evidence="2">
    <conflict type="erroneous initiation">
        <sequence resource="EMBL-CDS" id="AAT27598"/>
    </conflict>
</comment>
<sequence length="243" mass="28326">MIINYKFSDFYFDKKLSGKEVEFSIQIQKREASSDKNLQSKNLIIDAINVQRDFSEKNKSSDNLEILNKQIEDKNDLIINLEKKVFDLTLENKKNIDDFNEKAKSFAKKAQEELDKYKLELKSFLENEFEEKKKFSFQKLFENIINPLNNFRLAIDAGSKQENSSIKSYVQGFEMLLNQTINILESYGLIIIRPEIGDTFNPEVHNAVELREEGTPNRILKINSLGYQFHERVLKPASVIVSK</sequence>